<protein>
    <recommendedName>
        <fullName>Thaumatin-like protein 6</fullName>
    </recommendedName>
    <alternativeName>
        <fullName>CTLP6</fullName>
    </alternativeName>
</protein>
<dbReference type="InterPro" id="IPR037176">
    <property type="entry name" value="Osmotin/thaumatin-like_sf"/>
</dbReference>
<dbReference type="SUPFAM" id="SSF49870">
    <property type="entry name" value="Osmotin, thaumatin-like protein"/>
    <property type="match status" value="1"/>
</dbReference>
<comment type="induction">
    <text evidence="1 2">By phytoplasma infection.</text>
</comment>
<comment type="similarity">
    <text evidence="2">Belongs to the thaumatin family.</text>
</comment>
<feature type="chain" id="PRO_0000096228" description="Thaumatin-like protein 6">
    <location>
        <begin position="1"/>
        <end position="35" status="greater than"/>
    </location>
</feature>
<feature type="non-terminal residue" evidence="2">
    <location>
        <position position="35"/>
    </location>
</feature>
<keyword id="KW-0903">Direct protein sequencing</keyword>
<evidence type="ECO:0000269" key="1">
    <source>
    </source>
</evidence>
<evidence type="ECO:0000305" key="2"/>
<accession>P81955</accession>
<reference key="1">
    <citation type="journal article" date="2004" name="Acta Biochim. Biophys. Sin.">
        <title>Accumulation of pathogenesis-related type-5 like proteins in phytoplasma-infected garland chrysanthemum Chrysanthemum coronarium.</title>
        <authorList>
            <person name="Zhong B.X."/>
            <person name="Shen Y.W."/>
        </authorList>
    </citation>
    <scope>PROTEIN SEQUENCE</scope>
    <scope>INDUCTION</scope>
    <source>
        <strain>cv. Chu-you</strain>
    </source>
</reference>
<name>TLP6_GLECO</name>
<organism evidence="2">
    <name type="scientific">Glebionis coronaria</name>
    <name type="common">Crown daisy</name>
    <name type="synonym">Chrysanthemum coronarium</name>
    <dbReference type="NCBI Taxonomy" id="99038"/>
    <lineage>
        <taxon>Eukaryota</taxon>
        <taxon>Viridiplantae</taxon>
        <taxon>Streptophyta</taxon>
        <taxon>Embryophyta</taxon>
        <taxon>Tracheophyta</taxon>
        <taxon>Spermatophyta</taxon>
        <taxon>Magnoliopsida</taxon>
        <taxon>eudicotyledons</taxon>
        <taxon>Gunneridae</taxon>
        <taxon>Pentapetalae</taxon>
        <taxon>asterids</taxon>
        <taxon>campanulids</taxon>
        <taxon>Asterales</taxon>
        <taxon>Asteraceae</taxon>
        <taxon>Asteroideae</taxon>
        <taxon>Anthemideae</taxon>
        <taxon>Mediterranean clade</taxon>
        <taxon>Glebionidinae</taxon>
        <taxon>Glebionis</taxon>
    </lineage>
</organism>
<sequence>AIFTIRNNXQQTVXAGAVPVGGGQXLDXGQTXTLD</sequence>
<proteinExistence type="evidence at protein level"/>